<dbReference type="EC" id="2.4.2.18" evidence="1"/>
<dbReference type="EMBL" id="CP001089">
    <property type="protein sequence ID" value="ACD96199.1"/>
    <property type="molecule type" value="Genomic_DNA"/>
</dbReference>
<dbReference type="RefSeq" id="WP_012470532.1">
    <property type="nucleotide sequence ID" value="NC_010814.1"/>
</dbReference>
<dbReference type="SMR" id="B3E5V8"/>
<dbReference type="STRING" id="398767.Glov_2485"/>
<dbReference type="KEGG" id="glo:Glov_2485"/>
<dbReference type="eggNOG" id="COG0547">
    <property type="taxonomic scope" value="Bacteria"/>
</dbReference>
<dbReference type="HOGENOM" id="CLU_034315_2_1_7"/>
<dbReference type="OrthoDB" id="9806430at2"/>
<dbReference type="UniPathway" id="UPA00035">
    <property type="reaction ID" value="UER00041"/>
</dbReference>
<dbReference type="Proteomes" id="UP000002420">
    <property type="component" value="Chromosome"/>
</dbReference>
<dbReference type="GO" id="GO:0005829">
    <property type="term" value="C:cytosol"/>
    <property type="evidence" value="ECO:0007669"/>
    <property type="project" value="TreeGrafter"/>
</dbReference>
<dbReference type="GO" id="GO:0004048">
    <property type="term" value="F:anthranilate phosphoribosyltransferase activity"/>
    <property type="evidence" value="ECO:0007669"/>
    <property type="project" value="UniProtKB-UniRule"/>
</dbReference>
<dbReference type="GO" id="GO:0000287">
    <property type="term" value="F:magnesium ion binding"/>
    <property type="evidence" value="ECO:0007669"/>
    <property type="project" value="UniProtKB-UniRule"/>
</dbReference>
<dbReference type="GO" id="GO:0000162">
    <property type="term" value="P:L-tryptophan biosynthetic process"/>
    <property type="evidence" value="ECO:0007669"/>
    <property type="project" value="UniProtKB-UniRule"/>
</dbReference>
<dbReference type="FunFam" id="1.20.970.10:FF:000006">
    <property type="entry name" value="Anthranilate phosphoribosyltransferase"/>
    <property type="match status" value="1"/>
</dbReference>
<dbReference type="FunFam" id="3.40.1030.10:FF:000002">
    <property type="entry name" value="Anthranilate phosphoribosyltransferase"/>
    <property type="match status" value="1"/>
</dbReference>
<dbReference type="Gene3D" id="3.40.1030.10">
    <property type="entry name" value="Nucleoside phosphorylase/phosphoribosyltransferase catalytic domain"/>
    <property type="match status" value="1"/>
</dbReference>
<dbReference type="Gene3D" id="1.20.970.10">
    <property type="entry name" value="Transferase, Pyrimidine Nucleoside Phosphorylase, Chain C"/>
    <property type="match status" value="1"/>
</dbReference>
<dbReference type="HAMAP" id="MF_00211">
    <property type="entry name" value="TrpD"/>
    <property type="match status" value="1"/>
</dbReference>
<dbReference type="InterPro" id="IPR005940">
    <property type="entry name" value="Anthranilate_Pribosyl_Tfrase"/>
</dbReference>
<dbReference type="InterPro" id="IPR000312">
    <property type="entry name" value="Glycosyl_Trfase_fam3"/>
</dbReference>
<dbReference type="InterPro" id="IPR017459">
    <property type="entry name" value="Glycosyl_Trfase_fam3_N_dom"/>
</dbReference>
<dbReference type="InterPro" id="IPR036320">
    <property type="entry name" value="Glycosyl_Trfase_fam3_N_dom_sf"/>
</dbReference>
<dbReference type="InterPro" id="IPR035902">
    <property type="entry name" value="Nuc_phospho_transferase"/>
</dbReference>
<dbReference type="NCBIfam" id="TIGR01245">
    <property type="entry name" value="trpD"/>
    <property type="match status" value="1"/>
</dbReference>
<dbReference type="PANTHER" id="PTHR43285">
    <property type="entry name" value="ANTHRANILATE PHOSPHORIBOSYLTRANSFERASE"/>
    <property type="match status" value="1"/>
</dbReference>
<dbReference type="PANTHER" id="PTHR43285:SF2">
    <property type="entry name" value="ANTHRANILATE PHOSPHORIBOSYLTRANSFERASE"/>
    <property type="match status" value="1"/>
</dbReference>
<dbReference type="Pfam" id="PF02885">
    <property type="entry name" value="Glycos_trans_3N"/>
    <property type="match status" value="1"/>
</dbReference>
<dbReference type="Pfam" id="PF00591">
    <property type="entry name" value="Glycos_transf_3"/>
    <property type="match status" value="1"/>
</dbReference>
<dbReference type="SUPFAM" id="SSF52418">
    <property type="entry name" value="Nucleoside phosphorylase/phosphoribosyltransferase catalytic domain"/>
    <property type="match status" value="1"/>
</dbReference>
<dbReference type="SUPFAM" id="SSF47648">
    <property type="entry name" value="Nucleoside phosphorylase/phosphoribosyltransferase N-terminal domain"/>
    <property type="match status" value="1"/>
</dbReference>
<sequence>MIRQAIAKVVELRDLSEGEMIEVMNQIMSGECTPAQIGSFITALRMKGETIAEISGAARVMRERATPIRVGRNVLDIDRDDINLDQETILDVVGTGGDGTNTFNISTTVSFIVSACGVKVAKHGNRSVSSACGSADVLEKLGVNLDVTPEQVERCINEIGIGFLFAPALHGAMKHAIGPRREIGIRTIFNILGPLTNPANADCQVMGVYREELVAKMAGVLHHLGCKRGFVVHGRDGMDEITLTGETAAAEVSPEGVRLFTITPEEFGFSRCSMQALKGGDAVANAAIVRAVLGGEPGPRREIVLLNAGFALLAAGRCATVAAGIDLAAQAIDSGAALMQIEKLATLTN</sequence>
<name>TRPD_TRIL1</name>
<comment type="function">
    <text evidence="1">Catalyzes the transfer of the phosphoribosyl group of 5-phosphorylribose-1-pyrophosphate (PRPP) to anthranilate to yield N-(5'-phosphoribosyl)-anthranilate (PRA).</text>
</comment>
<comment type="catalytic activity">
    <reaction evidence="1">
        <text>N-(5-phospho-beta-D-ribosyl)anthranilate + diphosphate = 5-phospho-alpha-D-ribose 1-diphosphate + anthranilate</text>
        <dbReference type="Rhea" id="RHEA:11768"/>
        <dbReference type="ChEBI" id="CHEBI:16567"/>
        <dbReference type="ChEBI" id="CHEBI:18277"/>
        <dbReference type="ChEBI" id="CHEBI:33019"/>
        <dbReference type="ChEBI" id="CHEBI:58017"/>
        <dbReference type="EC" id="2.4.2.18"/>
    </reaction>
</comment>
<comment type="cofactor">
    <cofactor evidence="1">
        <name>Mg(2+)</name>
        <dbReference type="ChEBI" id="CHEBI:18420"/>
    </cofactor>
    <text evidence="1">Binds 2 magnesium ions per monomer.</text>
</comment>
<comment type="pathway">
    <text evidence="1">Amino-acid biosynthesis; L-tryptophan biosynthesis; L-tryptophan from chorismate: step 2/5.</text>
</comment>
<comment type="subunit">
    <text evidence="1">Homodimer.</text>
</comment>
<comment type="similarity">
    <text evidence="1">Belongs to the anthranilate phosphoribosyltransferase family.</text>
</comment>
<keyword id="KW-0028">Amino-acid biosynthesis</keyword>
<keyword id="KW-0057">Aromatic amino acid biosynthesis</keyword>
<keyword id="KW-0328">Glycosyltransferase</keyword>
<keyword id="KW-0460">Magnesium</keyword>
<keyword id="KW-0479">Metal-binding</keyword>
<keyword id="KW-1185">Reference proteome</keyword>
<keyword id="KW-0808">Transferase</keyword>
<keyword id="KW-0822">Tryptophan biosynthesis</keyword>
<reference key="1">
    <citation type="submission" date="2008-05" db="EMBL/GenBank/DDBJ databases">
        <title>Complete sequence of chromosome of Geobacter lovleyi SZ.</title>
        <authorList>
            <consortium name="US DOE Joint Genome Institute"/>
            <person name="Lucas S."/>
            <person name="Copeland A."/>
            <person name="Lapidus A."/>
            <person name="Glavina del Rio T."/>
            <person name="Dalin E."/>
            <person name="Tice H."/>
            <person name="Bruce D."/>
            <person name="Goodwin L."/>
            <person name="Pitluck S."/>
            <person name="Chertkov O."/>
            <person name="Meincke L."/>
            <person name="Brettin T."/>
            <person name="Detter J.C."/>
            <person name="Han C."/>
            <person name="Tapia R."/>
            <person name="Kuske C.R."/>
            <person name="Schmutz J."/>
            <person name="Larimer F."/>
            <person name="Land M."/>
            <person name="Hauser L."/>
            <person name="Kyrpides N."/>
            <person name="Mikhailova N."/>
            <person name="Sung Y."/>
            <person name="Fletcher K.E."/>
            <person name="Ritalahti K.M."/>
            <person name="Loeffler F.E."/>
            <person name="Richardson P."/>
        </authorList>
    </citation>
    <scope>NUCLEOTIDE SEQUENCE [LARGE SCALE GENOMIC DNA]</scope>
    <source>
        <strain>ATCC BAA-1151 / DSM 17278 / SZ</strain>
    </source>
</reference>
<proteinExistence type="inferred from homology"/>
<accession>B3E5V8</accession>
<protein>
    <recommendedName>
        <fullName evidence="1">Anthranilate phosphoribosyltransferase</fullName>
        <ecNumber evidence="1">2.4.2.18</ecNumber>
    </recommendedName>
</protein>
<organism>
    <name type="scientific">Trichlorobacter lovleyi (strain ATCC BAA-1151 / DSM 17278 / SZ)</name>
    <name type="common">Geobacter lovleyi</name>
    <dbReference type="NCBI Taxonomy" id="398767"/>
    <lineage>
        <taxon>Bacteria</taxon>
        <taxon>Pseudomonadati</taxon>
        <taxon>Thermodesulfobacteriota</taxon>
        <taxon>Desulfuromonadia</taxon>
        <taxon>Geobacterales</taxon>
        <taxon>Geobacteraceae</taxon>
        <taxon>Trichlorobacter</taxon>
    </lineage>
</organism>
<feature type="chain" id="PRO_1000099807" description="Anthranilate phosphoribosyltransferase">
    <location>
        <begin position="1"/>
        <end position="349"/>
    </location>
</feature>
<feature type="binding site" evidence="1">
    <location>
        <position position="94"/>
    </location>
    <ligand>
        <name>5-phospho-alpha-D-ribose 1-diphosphate</name>
        <dbReference type="ChEBI" id="CHEBI:58017"/>
    </ligand>
</feature>
<feature type="binding site" evidence="1">
    <location>
        <position position="94"/>
    </location>
    <ligand>
        <name>anthranilate</name>
        <dbReference type="ChEBI" id="CHEBI:16567"/>
        <label>1</label>
    </ligand>
</feature>
<feature type="binding site" evidence="1">
    <location>
        <begin position="97"/>
        <end position="98"/>
    </location>
    <ligand>
        <name>5-phospho-alpha-D-ribose 1-diphosphate</name>
        <dbReference type="ChEBI" id="CHEBI:58017"/>
    </ligand>
</feature>
<feature type="binding site" evidence="1">
    <location>
        <position position="102"/>
    </location>
    <ligand>
        <name>5-phospho-alpha-D-ribose 1-diphosphate</name>
        <dbReference type="ChEBI" id="CHEBI:58017"/>
    </ligand>
</feature>
<feature type="binding site" evidence="1">
    <location>
        <begin position="104"/>
        <end position="107"/>
    </location>
    <ligand>
        <name>5-phospho-alpha-D-ribose 1-diphosphate</name>
        <dbReference type="ChEBI" id="CHEBI:58017"/>
    </ligand>
</feature>
<feature type="binding site" evidence="1">
    <location>
        <position position="106"/>
    </location>
    <ligand>
        <name>Mg(2+)</name>
        <dbReference type="ChEBI" id="CHEBI:18420"/>
        <label>1</label>
    </ligand>
</feature>
<feature type="binding site" evidence="1">
    <location>
        <begin position="122"/>
        <end position="130"/>
    </location>
    <ligand>
        <name>5-phospho-alpha-D-ribose 1-diphosphate</name>
        <dbReference type="ChEBI" id="CHEBI:58017"/>
    </ligand>
</feature>
<feature type="binding site" evidence="1">
    <location>
        <position position="125"/>
    </location>
    <ligand>
        <name>anthranilate</name>
        <dbReference type="ChEBI" id="CHEBI:16567"/>
        <label>1</label>
    </ligand>
</feature>
<feature type="binding site" evidence="1">
    <location>
        <position position="134"/>
    </location>
    <ligand>
        <name>5-phospho-alpha-D-ribose 1-diphosphate</name>
        <dbReference type="ChEBI" id="CHEBI:58017"/>
    </ligand>
</feature>
<feature type="binding site" evidence="1">
    <location>
        <position position="180"/>
    </location>
    <ligand>
        <name>anthranilate</name>
        <dbReference type="ChEBI" id="CHEBI:16567"/>
        <label>2</label>
    </ligand>
</feature>
<feature type="binding site" evidence="1">
    <location>
        <position position="239"/>
    </location>
    <ligand>
        <name>Mg(2+)</name>
        <dbReference type="ChEBI" id="CHEBI:18420"/>
        <label>2</label>
    </ligand>
</feature>
<feature type="binding site" evidence="1">
    <location>
        <position position="240"/>
    </location>
    <ligand>
        <name>Mg(2+)</name>
        <dbReference type="ChEBI" id="CHEBI:18420"/>
        <label>1</label>
    </ligand>
</feature>
<feature type="binding site" evidence="1">
    <location>
        <position position="240"/>
    </location>
    <ligand>
        <name>Mg(2+)</name>
        <dbReference type="ChEBI" id="CHEBI:18420"/>
        <label>2</label>
    </ligand>
</feature>
<gene>
    <name evidence="1" type="primary">trpD</name>
    <name type="ordered locus">Glov_2485</name>
</gene>
<evidence type="ECO:0000255" key="1">
    <source>
        <dbReference type="HAMAP-Rule" id="MF_00211"/>
    </source>
</evidence>